<evidence type="ECO:0000255" key="1"/>
<evidence type="ECO:0000269" key="2">
    <source>
    </source>
</evidence>
<evidence type="ECO:0000269" key="3">
    <source>
    </source>
</evidence>
<evidence type="ECO:0000269" key="4">
    <source>
    </source>
</evidence>
<evidence type="ECO:0000269" key="5">
    <source>
    </source>
</evidence>
<evidence type="ECO:0000269" key="6">
    <source>
    </source>
</evidence>
<evidence type="ECO:0000269" key="7">
    <source>
    </source>
</evidence>
<evidence type="ECO:0000269" key="8">
    <source>
    </source>
</evidence>
<evidence type="ECO:0000269" key="9">
    <source>
    </source>
</evidence>
<evidence type="ECO:0000269" key="10">
    <source>
    </source>
</evidence>
<evidence type="ECO:0000269" key="11">
    <source>
    </source>
</evidence>
<evidence type="ECO:0000305" key="12"/>
<evidence type="ECO:0007829" key="13">
    <source>
        <dbReference type="PDB" id="2X1W"/>
    </source>
</evidence>
<sequence length="419" mass="46883">MHLLGFFSVACSLLAAALLPGPREAPAAAAAFESGLDLSDAEPDAGEATAYASKDLEEQLRSVSSVDELMTVLYPEYWKMYKCQLRKGGWQHNREQANLNSRTEETIKFAAAHYNTEILKSIDNEWRKTQCMPREVCIDVGKEFGVATNTFFKPPCVSVYRCGGCCNSEGLQCMNTSTSYLSKTLFEITVPLSQGPKPVTISFANHTSCRCMSKLDVYRQVHSIIRRSLPATLPQCQAANKTCPTNYMWNNHICRCLAQEDFMFSSDAGDDSTDGFHDICGPNKELDEETCQCVCRAGLRPASCGPHKELDRNSCQCVCKNKLFPSQCGANREFDENTCQCVCKRTCPRNQPLNPGKCACECTESPQKCLLKGKKFHHQTCSCYRRPCTNRQKACEPGFSYSEEVCRCVPSYWKRPQMS</sequence>
<feature type="signal peptide" evidence="2 10">
    <location>
        <begin position="1"/>
        <end position="31"/>
    </location>
</feature>
<feature type="propeptide" id="PRO_0000023400" description="Or 102" evidence="10">
    <location>
        <begin position="32"/>
        <end position="111"/>
    </location>
</feature>
<feature type="chain" id="PRO_0000023401" description="Vascular endothelial growth factor C">
    <location>
        <begin position="112"/>
        <end position="227"/>
    </location>
</feature>
<feature type="propeptide" id="PRO_0000023402">
    <location>
        <begin position="228"/>
        <end position="419"/>
    </location>
</feature>
<feature type="repeat" description="1">
    <location>
        <begin position="280"/>
        <end position="295"/>
    </location>
</feature>
<feature type="repeat" description="2">
    <location>
        <begin position="304"/>
        <end position="319"/>
    </location>
</feature>
<feature type="repeat" description="3">
    <location>
        <begin position="328"/>
        <end position="343"/>
    </location>
</feature>
<feature type="repeat" description="4">
    <location>
        <begin position="347"/>
        <end position="362"/>
    </location>
</feature>
<feature type="region of interest" description="4 X 16 AA repeats of C-X(10)-C-X-C-X(1,3)-C">
    <location>
        <begin position="280"/>
        <end position="362"/>
    </location>
</feature>
<feature type="glycosylation site" description="N-linked (GlcNAc...) asparagine" evidence="3 5">
    <location>
        <position position="175"/>
    </location>
</feature>
<feature type="glycosylation site" description="N-linked (GlcNAc...) asparagine" evidence="3 5">
    <location>
        <position position="205"/>
    </location>
</feature>
<feature type="glycosylation site" description="N-linked (GlcNAc...) asparagine" evidence="1">
    <location>
        <position position="240"/>
    </location>
</feature>
<feature type="disulfide bond" evidence="3 5">
    <location>
        <begin position="131"/>
        <end position="173"/>
    </location>
</feature>
<feature type="disulfide bond" description="Interchain" evidence="3 5">
    <location>
        <position position="156"/>
    </location>
</feature>
<feature type="disulfide bond" evidence="3 5">
    <location>
        <begin position="162"/>
        <end position="209"/>
    </location>
</feature>
<feature type="disulfide bond" description="Interchain" evidence="3 5">
    <location>
        <position position="165"/>
    </location>
</feature>
<feature type="disulfide bond" evidence="3 5">
    <location>
        <begin position="166"/>
        <end position="211"/>
    </location>
</feature>
<feature type="mutagenesis site" description="No proteolytic processing and lower effect on VEGFR-2 and VEGFR-3." evidence="10">
    <original>R</original>
    <variation>S</variation>
    <location>
        <position position="227"/>
    </location>
</feature>
<feature type="helix" evidence="13">
    <location>
        <begin position="117"/>
        <end position="129"/>
    </location>
</feature>
<feature type="strand" evidence="13">
    <location>
        <begin position="130"/>
        <end position="139"/>
    </location>
</feature>
<feature type="turn" evidence="13">
    <location>
        <begin position="140"/>
        <end position="142"/>
    </location>
</feature>
<feature type="strand" evidence="13">
    <location>
        <begin position="151"/>
        <end position="163"/>
    </location>
</feature>
<feature type="strand" evidence="13">
    <location>
        <begin position="167"/>
        <end position="170"/>
    </location>
</feature>
<feature type="strand" evidence="13">
    <location>
        <begin position="172"/>
        <end position="188"/>
    </location>
</feature>
<feature type="strand" evidence="13">
    <location>
        <begin position="190"/>
        <end position="194"/>
    </location>
</feature>
<feature type="strand" evidence="13">
    <location>
        <begin position="197"/>
        <end position="212"/>
    </location>
</feature>
<name>VEGFC_HUMAN</name>
<gene>
    <name type="primary">VEGFC</name>
</gene>
<protein>
    <recommendedName>
        <fullName>Vascular endothelial growth factor C</fullName>
        <shortName>VEGF-C</shortName>
    </recommendedName>
    <alternativeName>
        <fullName>Flt4 ligand</fullName>
        <shortName>Flt4-L</shortName>
    </alternativeName>
    <alternativeName>
        <fullName>Vascular endothelial growth factor-related protein</fullName>
        <shortName>VRP</shortName>
    </alternativeName>
</protein>
<dbReference type="EMBL" id="X94216">
    <property type="protein sequence ID" value="CAA63907.1"/>
    <property type="molecule type" value="mRNA"/>
</dbReference>
<dbReference type="EMBL" id="U43142">
    <property type="protein sequence ID" value="AAA85214.1"/>
    <property type="molecule type" value="mRNA"/>
</dbReference>
<dbReference type="EMBL" id="U58111">
    <property type="protein sequence ID" value="AAB02909.1"/>
    <property type="molecule type" value="mRNA"/>
</dbReference>
<dbReference type="EMBL" id="AK313879">
    <property type="protein sequence ID" value="BAG36605.1"/>
    <property type="molecule type" value="mRNA"/>
</dbReference>
<dbReference type="EMBL" id="AC092673">
    <property type="status" value="NOT_ANNOTATED_CDS"/>
    <property type="molecule type" value="Genomic_DNA"/>
</dbReference>
<dbReference type="EMBL" id="AC093801">
    <property type="status" value="NOT_ANNOTATED_CDS"/>
    <property type="molecule type" value="Genomic_DNA"/>
</dbReference>
<dbReference type="EMBL" id="CH471056">
    <property type="protein sequence ID" value="EAX04717.1"/>
    <property type="molecule type" value="Genomic_DNA"/>
</dbReference>
<dbReference type="EMBL" id="BC035212">
    <property type="protein sequence ID" value="AAH35212.1"/>
    <property type="molecule type" value="mRNA"/>
</dbReference>
<dbReference type="EMBL" id="BC063685">
    <property type="protein sequence ID" value="AAH63685.1"/>
    <property type="molecule type" value="mRNA"/>
</dbReference>
<dbReference type="CCDS" id="CCDS43285.1"/>
<dbReference type="PIR" id="S69207">
    <property type="entry name" value="S69207"/>
</dbReference>
<dbReference type="RefSeq" id="NP_005420.1">
    <property type="nucleotide sequence ID" value="NM_005429.5"/>
</dbReference>
<dbReference type="PDB" id="2X1W">
    <property type="method" value="X-ray"/>
    <property type="resolution" value="2.70 A"/>
    <property type="chains" value="A/B/C/D=112-215"/>
</dbReference>
<dbReference type="PDB" id="2X1X">
    <property type="method" value="X-ray"/>
    <property type="resolution" value="3.10 A"/>
    <property type="chains" value="E=112-215"/>
</dbReference>
<dbReference type="PDB" id="4BSK">
    <property type="method" value="X-ray"/>
    <property type="resolution" value="4.20 A"/>
    <property type="chains" value="C=103-215"/>
</dbReference>
<dbReference type="PDB" id="6TJT">
    <property type="method" value="X-ray"/>
    <property type="resolution" value="1.31 A"/>
    <property type="chains" value="D/F=223-227"/>
</dbReference>
<dbReference type="PDBsum" id="2X1W"/>
<dbReference type="PDBsum" id="2X1X"/>
<dbReference type="PDBsum" id="4BSK"/>
<dbReference type="PDBsum" id="6TJT"/>
<dbReference type="SMR" id="P49767"/>
<dbReference type="BioGRID" id="113267">
    <property type="interactions" value="4"/>
</dbReference>
<dbReference type="ComplexPortal" id="CPX-7403">
    <property type="entry name" value="Vascular endothelial growth factor C complex"/>
</dbReference>
<dbReference type="CORUM" id="P49767"/>
<dbReference type="DIP" id="DIP-5738N"/>
<dbReference type="FunCoup" id="P49767">
    <property type="interactions" value="1081"/>
</dbReference>
<dbReference type="IntAct" id="P49767">
    <property type="interactions" value="3"/>
</dbReference>
<dbReference type="STRING" id="9606.ENSP00000480043"/>
<dbReference type="ChEMBL" id="CHEMBL3714157"/>
<dbReference type="DrugBank" id="DB12818">
    <property type="generic name" value="NM-3"/>
</dbReference>
<dbReference type="DrugBank" id="DB14911">
    <property type="generic name" value="Risuteganib"/>
</dbReference>
<dbReference type="DrugBank" id="DB06461">
    <property type="generic name" value="Squalamine"/>
</dbReference>
<dbReference type="DrugBank" id="DB05075">
    <property type="generic name" value="TG-100801"/>
</dbReference>
<dbReference type="TCDB" id="8.A.245.1.3">
    <property type="family name" value="the vascular endothelial growth factor (vegf) family"/>
</dbReference>
<dbReference type="GlyCosmos" id="P49767">
    <property type="glycosylation" value="3 sites, No reported glycans"/>
</dbReference>
<dbReference type="GlyGen" id="P49767">
    <property type="glycosylation" value="4 sites, 2 N-linked glycans (2 sites), 1 O-linked glycan (1 site)"/>
</dbReference>
<dbReference type="iPTMnet" id="P49767"/>
<dbReference type="PhosphoSitePlus" id="P49767"/>
<dbReference type="BioMuta" id="VEGFC"/>
<dbReference type="DMDM" id="1718154"/>
<dbReference type="MassIVE" id="P49767"/>
<dbReference type="PaxDb" id="9606-ENSP00000480043"/>
<dbReference type="PeptideAtlas" id="P49767"/>
<dbReference type="ProteomicsDB" id="56105"/>
<dbReference type="Antibodypedia" id="28667">
    <property type="antibodies" value="995 antibodies from 39 providers"/>
</dbReference>
<dbReference type="DNASU" id="7424"/>
<dbReference type="Ensembl" id="ENST00000618562.2">
    <property type="protein sequence ID" value="ENSP00000480043.1"/>
    <property type="gene ID" value="ENSG00000150630.4"/>
</dbReference>
<dbReference type="GeneID" id="7424"/>
<dbReference type="KEGG" id="hsa:7424"/>
<dbReference type="MANE-Select" id="ENST00000618562.2">
    <property type="protein sequence ID" value="ENSP00000480043.1"/>
    <property type="RefSeq nucleotide sequence ID" value="NM_005429.5"/>
    <property type="RefSeq protein sequence ID" value="NP_005420.1"/>
</dbReference>
<dbReference type="UCSC" id="uc032ufc.2">
    <property type="organism name" value="human"/>
</dbReference>
<dbReference type="AGR" id="HGNC:12682"/>
<dbReference type="CTD" id="7424"/>
<dbReference type="DisGeNET" id="7424"/>
<dbReference type="GeneCards" id="VEGFC"/>
<dbReference type="HGNC" id="HGNC:12682">
    <property type="gene designation" value="VEGFC"/>
</dbReference>
<dbReference type="HPA" id="ENSG00000150630">
    <property type="expression patterns" value="Low tissue specificity"/>
</dbReference>
<dbReference type="MalaCards" id="VEGFC"/>
<dbReference type="MIM" id="601528">
    <property type="type" value="gene"/>
</dbReference>
<dbReference type="MIM" id="615907">
    <property type="type" value="phenotype"/>
</dbReference>
<dbReference type="neXtProt" id="NX_P49767"/>
<dbReference type="OpenTargets" id="ENSG00000150630"/>
<dbReference type="Orphanet" id="569821">
    <property type="disease" value="Congenital primary lymphedema of Gordon"/>
</dbReference>
<dbReference type="PharmGKB" id="PA37304"/>
<dbReference type="VEuPathDB" id="HostDB:ENSG00000150630"/>
<dbReference type="eggNOG" id="ENOG502QVXE">
    <property type="taxonomic scope" value="Eukaryota"/>
</dbReference>
<dbReference type="GeneTree" id="ENSGT00940000156167"/>
<dbReference type="HOGENOM" id="CLU_061712_1_0_1"/>
<dbReference type="InParanoid" id="P49767"/>
<dbReference type="OMA" id="ALPQCQA"/>
<dbReference type="OrthoDB" id="9981160at2759"/>
<dbReference type="PAN-GO" id="P49767">
    <property type="GO annotations" value="13 GO annotations based on evolutionary models"/>
</dbReference>
<dbReference type="PhylomeDB" id="P49767"/>
<dbReference type="TreeFam" id="TF319554"/>
<dbReference type="PathwayCommons" id="P49767"/>
<dbReference type="Reactome" id="R-HSA-114608">
    <property type="pathway name" value="Platelet degranulation"/>
</dbReference>
<dbReference type="Reactome" id="R-HSA-194313">
    <property type="pathway name" value="VEGF ligand-receptor interactions"/>
</dbReference>
<dbReference type="Reactome" id="R-HSA-195399">
    <property type="pathway name" value="VEGF binds to VEGFR leading to receptor dimerization"/>
</dbReference>
<dbReference type="SignaLink" id="P49767"/>
<dbReference type="SIGNOR" id="P49767"/>
<dbReference type="BioGRID-ORCS" id="7424">
    <property type="hits" value="11 hits in 1148 CRISPR screens"/>
</dbReference>
<dbReference type="ChiTaRS" id="VEGFC">
    <property type="organism name" value="human"/>
</dbReference>
<dbReference type="EvolutionaryTrace" id="P49767"/>
<dbReference type="GeneWiki" id="Vascular_endothelial_growth_factor_C"/>
<dbReference type="GenomeRNAi" id="7424"/>
<dbReference type="Pharos" id="P49767">
    <property type="development level" value="Tbio"/>
</dbReference>
<dbReference type="PRO" id="PR:P49767"/>
<dbReference type="Proteomes" id="UP000005640">
    <property type="component" value="Chromosome 4"/>
</dbReference>
<dbReference type="RNAct" id="P49767">
    <property type="molecule type" value="protein"/>
</dbReference>
<dbReference type="Bgee" id="ENSG00000150630">
    <property type="expression patterns" value="Expressed in stromal cell of endometrium and 146 other cell types or tissues"/>
</dbReference>
<dbReference type="GO" id="GO:0005576">
    <property type="term" value="C:extracellular region"/>
    <property type="evidence" value="ECO:0000304"/>
    <property type="project" value="Reactome"/>
</dbReference>
<dbReference type="GO" id="GO:0005615">
    <property type="term" value="C:extracellular space"/>
    <property type="evidence" value="ECO:0000318"/>
    <property type="project" value="GO_Central"/>
</dbReference>
<dbReference type="GO" id="GO:0016020">
    <property type="term" value="C:membrane"/>
    <property type="evidence" value="ECO:0007669"/>
    <property type="project" value="InterPro"/>
</dbReference>
<dbReference type="GO" id="GO:0031093">
    <property type="term" value="C:platelet alpha granule lumen"/>
    <property type="evidence" value="ECO:0000304"/>
    <property type="project" value="Reactome"/>
</dbReference>
<dbReference type="GO" id="GO:0042056">
    <property type="term" value="F:chemoattractant activity"/>
    <property type="evidence" value="ECO:0000314"/>
    <property type="project" value="UniProtKB"/>
</dbReference>
<dbReference type="GO" id="GO:0008083">
    <property type="term" value="F:growth factor activity"/>
    <property type="evidence" value="ECO:0000318"/>
    <property type="project" value="GO_Central"/>
</dbReference>
<dbReference type="GO" id="GO:0043185">
    <property type="term" value="F:vascular endothelial growth factor receptor 3 binding"/>
    <property type="evidence" value="ECO:0000353"/>
    <property type="project" value="UniProtKB"/>
</dbReference>
<dbReference type="GO" id="GO:0009887">
    <property type="term" value="P:animal organ morphogenesis"/>
    <property type="evidence" value="ECO:0007669"/>
    <property type="project" value="Ensembl"/>
</dbReference>
<dbReference type="GO" id="GO:1990830">
    <property type="term" value="P:cellular response to leukemia inhibitory factor"/>
    <property type="evidence" value="ECO:0007669"/>
    <property type="project" value="Ensembl"/>
</dbReference>
<dbReference type="GO" id="GO:0014009">
    <property type="term" value="P:glial cell proliferation"/>
    <property type="evidence" value="ECO:0007669"/>
    <property type="project" value="Ensembl"/>
</dbReference>
<dbReference type="GO" id="GO:0050930">
    <property type="term" value="P:induction of positive chemotaxis"/>
    <property type="evidence" value="ECO:0000314"/>
    <property type="project" value="UniProtKB"/>
</dbReference>
<dbReference type="GO" id="GO:0016331">
    <property type="term" value="P:morphogenesis of embryonic epithelium"/>
    <property type="evidence" value="ECO:0007669"/>
    <property type="project" value="Ensembl"/>
</dbReference>
<dbReference type="GO" id="GO:0045776">
    <property type="term" value="P:negative regulation of blood pressure"/>
    <property type="evidence" value="ECO:0007669"/>
    <property type="project" value="Ensembl"/>
</dbReference>
<dbReference type="GO" id="GO:0045668">
    <property type="term" value="P:negative regulation of osteoblast differentiation"/>
    <property type="evidence" value="ECO:0007669"/>
    <property type="project" value="Ensembl"/>
</dbReference>
<dbReference type="GO" id="GO:0045766">
    <property type="term" value="P:positive regulation of angiogenesis"/>
    <property type="evidence" value="ECO:0007669"/>
    <property type="project" value="Ensembl"/>
</dbReference>
<dbReference type="GO" id="GO:0043536">
    <property type="term" value="P:positive regulation of blood vessel endothelial cell migration"/>
    <property type="evidence" value="ECO:0007669"/>
    <property type="project" value="Ensembl"/>
</dbReference>
<dbReference type="GO" id="GO:0051781">
    <property type="term" value="P:positive regulation of cell division"/>
    <property type="evidence" value="ECO:0007669"/>
    <property type="project" value="UniProtKB-KW"/>
</dbReference>
<dbReference type="GO" id="GO:0008284">
    <property type="term" value="P:positive regulation of cell population proliferation"/>
    <property type="evidence" value="ECO:0000304"/>
    <property type="project" value="ProtInc"/>
</dbReference>
<dbReference type="GO" id="GO:0050679">
    <property type="term" value="P:positive regulation of epithelial cell proliferation"/>
    <property type="evidence" value="ECO:0007669"/>
    <property type="project" value="Ensembl"/>
</dbReference>
<dbReference type="GO" id="GO:0060252">
    <property type="term" value="P:positive regulation of glial cell proliferation"/>
    <property type="evidence" value="ECO:0007669"/>
    <property type="project" value="Ensembl"/>
</dbReference>
<dbReference type="GO" id="GO:1901492">
    <property type="term" value="P:positive regulation of lymphangiogenesis"/>
    <property type="evidence" value="ECO:0007669"/>
    <property type="project" value="Ensembl"/>
</dbReference>
<dbReference type="GO" id="GO:0060754">
    <property type="term" value="P:positive regulation of mast cell chemotaxis"/>
    <property type="evidence" value="ECO:0000314"/>
    <property type="project" value="UniProtKB"/>
</dbReference>
<dbReference type="GO" id="GO:1902462">
    <property type="term" value="P:positive regulation of mesenchymal stem cell proliferation"/>
    <property type="evidence" value="ECO:0007669"/>
    <property type="project" value="Ensembl"/>
</dbReference>
<dbReference type="GO" id="GO:0002052">
    <property type="term" value="P:positive regulation of neuroblast proliferation"/>
    <property type="evidence" value="ECO:0007669"/>
    <property type="project" value="Ensembl"/>
</dbReference>
<dbReference type="GO" id="GO:0050714">
    <property type="term" value="P:positive regulation of protein secretion"/>
    <property type="evidence" value="ECO:0007669"/>
    <property type="project" value="Ensembl"/>
</dbReference>
<dbReference type="GO" id="GO:0030947">
    <property type="term" value="P:regulation of vascular endothelial growth factor receptor signaling pathway"/>
    <property type="evidence" value="ECO:0007669"/>
    <property type="project" value="Ensembl"/>
</dbReference>
<dbReference type="GO" id="GO:0001666">
    <property type="term" value="P:response to hypoxia"/>
    <property type="evidence" value="ECO:0000318"/>
    <property type="project" value="GO_Central"/>
</dbReference>
<dbReference type="GO" id="GO:0009410">
    <property type="term" value="P:response to xenobiotic stimulus"/>
    <property type="evidence" value="ECO:0007669"/>
    <property type="project" value="Ensembl"/>
</dbReference>
<dbReference type="GO" id="GO:0007165">
    <property type="term" value="P:signal transduction"/>
    <property type="evidence" value="ECO:0000304"/>
    <property type="project" value="ProtInc"/>
</dbReference>
<dbReference type="GO" id="GO:0002040">
    <property type="term" value="P:sprouting angiogenesis"/>
    <property type="evidence" value="ECO:0000318"/>
    <property type="project" value="GO_Central"/>
</dbReference>
<dbReference type="GO" id="GO:0006929">
    <property type="term" value="P:substrate-dependent cell migration"/>
    <property type="evidence" value="ECO:0000304"/>
    <property type="project" value="ProtInc"/>
</dbReference>
<dbReference type="GO" id="GO:0048010">
    <property type="term" value="P:vascular endothelial growth factor receptor signaling pathway"/>
    <property type="evidence" value="ECO:0000314"/>
    <property type="project" value="UniProtKB"/>
</dbReference>
<dbReference type="GO" id="GO:0038084">
    <property type="term" value="P:vascular endothelial growth factor signaling pathway"/>
    <property type="evidence" value="ECO:0000318"/>
    <property type="project" value="GO_Central"/>
</dbReference>
<dbReference type="CDD" id="cd00135">
    <property type="entry name" value="PDGF"/>
    <property type="match status" value="1"/>
</dbReference>
<dbReference type="FunFam" id="2.10.90.10:FF:000025">
    <property type="entry name" value="vascular endothelial growth factor C"/>
    <property type="match status" value="1"/>
</dbReference>
<dbReference type="Gene3D" id="2.10.90.10">
    <property type="entry name" value="Cystine-knot cytokines"/>
    <property type="match status" value="1"/>
</dbReference>
<dbReference type="InterPro" id="IPR004153">
    <property type="entry name" value="CXCXC_repeat"/>
</dbReference>
<dbReference type="InterPro" id="IPR029034">
    <property type="entry name" value="Cystine-knot_cytokine"/>
</dbReference>
<dbReference type="InterPro" id="IPR023581">
    <property type="entry name" value="PD_growth_factor_CS"/>
</dbReference>
<dbReference type="InterPro" id="IPR000072">
    <property type="entry name" value="PDGF/VEGF_dom"/>
</dbReference>
<dbReference type="InterPro" id="IPR050507">
    <property type="entry name" value="PDGF/VEGF_growth_factor"/>
</dbReference>
<dbReference type="PANTHER" id="PTHR12025">
    <property type="entry name" value="VASCULAR ENDOTHELIAL GROWTH FACTOR"/>
    <property type="match status" value="1"/>
</dbReference>
<dbReference type="PANTHER" id="PTHR12025:SF3">
    <property type="entry name" value="VASCULAR ENDOTHELIAL GROWTH FACTOR C"/>
    <property type="match status" value="1"/>
</dbReference>
<dbReference type="Pfam" id="PF03128">
    <property type="entry name" value="CXCXC"/>
    <property type="match status" value="3"/>
</dbReference>
<dbReference type="Pfam" id="PF00341">
    <property type="entry name" value="PDGF"/>
    <property type="match status" value="1"/>
</dbReference>
<dbReference type="SMART" id="SM00141">
    <property type="entry name" value="PDGF"/>
    <property type="match status" value="1"/>
</dbReference>
<dbReference type="SUPFAM" id="SSF57501">
    <property type="entry name" value="Cystine-knot cytokines"/>
    <property type="match status" value="1"/>
</dbReference>
<dbReference type="PROSITE" id="PS00249">
    <property type="entry name" value="PDGF_1"/>
    <property type="match status" value="1"/>
</dbReference>
<dbReference type="PROSITE" id="PS50278">
    <property type="entry name" value="PDGF_2"/>
    <property type="match status" value="1"/>
</dbReference>
<proteinExistence type="evidence at protein level"/>
<reference key="1">
    <citation type="journal article" date="1996" name="EMBO J.">
        <title>A novel vascular endothelial growth factor, VEGF-C, is a ligand for the Flt4 (VEGFR-3) and KDR (VEGFR-2) receptor tyrosine kinases.</title>
        <authorList>
            <person name="Joukov V."/>
            <person name="Pajusola K."/>
            <person name="Kaipainen A."/>
            <person name="Chilov D."/>
            <person name="Lahtinen I."/>
            <person name="Kukk E."/>
            <person name="Saksela O."/>
            <person name="Kalkkinen N."/>
            <person name="Alitalo K."/>
        </authorList>
    </citation>
    <scope>NUCLEOTIDE SEQUENCE [MRNA]</scope>
    <scope>PROTEIN SEQUENCE OF 103-120</scope>
    <scope>TISSUE SPECIFICITY</scope>
</reference>
<reference key="2">
    <citation type="journal article" date="1996" name="EMBO J.">
        <authorList>
            <person name="Joukov V."/>
            <person name="Pajusola K."/>
            <person name="Kaipainen A."/>
            <person name="Chilov D."/>
            <person name="Lahtinen I."/>
            <person name="Kukk E."/>
            <person name="Saksela O."/>
            <person name="Kalkkinen N."/>
            <person name="Alitalo K."/>
        </authorList>
    </citation>
    <scope>ERRATUM OF PUBMED:8617204</scope>
</reference>
<reference key="3">
    <citation type="journal article" date="1996" name="Proc. Natl. Acad. Sci. U.S.A.">
        <title>Vascular endothelial growth factor-related protein: a ligand and specific activator of the tyrosine kinase receptor Flt4.</title>
        <authorList>
            <person name="Lee J."/>
            <person name="Gray A."/>
            <person name="Yuan J."/>
            <person name="Luoh S.-M."/>
            <person name="Avraham H."/>
            <person name="Wood W.I."/>
        </authorList>
    </citation>
    <scope>NUCLEOTIDE SEQUENCE [MRNA]</scope>
    <scope>TISSUE SPECIFICITY</scope>
    <scope>DEVELOPMENTAL STAGE</scope>
    <source>
        <tissue>Glial tumor</tissue>
    </source>
</reference>
<reference key="4">
    <citation type="journal article" date="1997" name="Oncogene">
        <title>Characterization of murine Flt4 ligand/VEGF-C.</title>
        <authorList>
            <person name="Fitz L.J."/>
            <person name="Morris J.C."/>
            <person name="Towler P."/>
            <person name="Long A."/>
            <person name="Burgess P."/>
            <person name="Greco R."/>
            <person name="Wang J."/>
            <person name="Gassaway R."/>
            <person name="Nickbarg E."/>
            <person name="Kovacic S."/>
            <person name="Ciarletta A."/>
            <person name="Giannotti J."/>
            <person name="Finnerty H."/>
            <person name="Zollner R."/>
            <person name="Beier D.R."/>
            <person name="Leak L.V."/>
            <person name="Turner K.J."/>
            <person name="Wood C.R."/>
        </authorList>
    </citation>
    <scope>NUCLEOTIDE SEQUENCE [MRNA]</scope>
    <scope>TISSUE SPECIFICITY</scope>
    <scope>DEVELOPMENTAL STAGE</scope>
</reference>
<reference key="5">
    <citation type="journal article" date="2004" name="Nat. Genet.">
        <title>Complete sequencing and characterization of 21,243 full-length human cDNAs.</title>
        <authorList>
            <person name="Ota T."/>
            <person name="Suzuki Y."/>
            <person name="Nishikawa T."/>
            <person name="Otsuki T."/>
            <person name="Sugiyama T."/>
            <person name="Irie R."/>
            <person name="Wakamatsu A."/>
            <person name="Hayashi K."/>
            <person name="Sato H."/>
            <person name="Nagai K."/>
            <person name="Kimura K."/>
            <person name="Makita H."/>
            <person name="Sekine M."/>
            <person name="Obayashi M."/>
            <person name="Nishi T."/>
            <person name="Shibahara T."/>
            <person name="Tanaka T."/>
            <person name="Ishii S."/>
            <person name="Yamamoto J."/>
            <person name="Saito K."/>
            <person name="Kawai Y."/>
            <person name="Isono Y."/>
            <person name="Nakamura Y."/>
            <person name="Nagahari K."/>
            <person name="Murakami K."/>
            <person name="Yasuda T."/>
            <person name="Iwayanagi T."/>
            <person name="Wagatsuma M."/>
            <person name="Shiratori A."/>
            <person name="Sudo H."/>
            <person name="Hosoiri T."/>
            <person name="Kaku Y."/>
            <person name="Kodaira H."/>
            <person name="Kondo H."/>
            <person name="Sugawara M."/>
            <person name="Takahashi M."/>
            <person name="Kanda K."/>
            <person name="Yokoi T."/>
            <person name="Furuya T."/>
            <person name="Kikkawa E."/>
            <person name="Omura Y."/>
            <person name="Abe K."/>
            <person name="Kamihara K."/>
            <person name="Katsuta N."/>
            <person name="Sato K."/>
            <person name="Tanikawa M."/>
            <person name="Yamazaki M."/>
            <person name="Ninomiya K."/>
            <person name="Ishibashi T."/>
            <person name="Yamashita H."/>
            <person name="Murakawa K."/>
            <person name="Fujimori K."/>
            <person name="Tanai H."/>
            <person name="Kimata M."/>
            <person name="Watanabe M."/>
            <person name="Hiraoka S."/>
            <person name="Chiba Y."/>
            <person name="Ishida S."/>
            <person name="Ono Y."/>
            <person name="Takiguchi S."/>
            <person name="Watanabe S."/>
            <person name="Yosida M."/>
            <person name="Hotuta T."/>
            <person name="Kusano J."/>
            <person name="Kanehori K."/>
            <person name="Takahashi-Fujii A."/>
            <person name="Hara H."/>
            <person name="Tanase T.-O."/>
            <person name="Nomura Y."/>
            <person name="Togiya S."/>
            <person name="Komai F."/>
            <person name="Hara R."/>
            <person name="Takeuchi K."/>
            <person name="Arita M."/>
            <person name="Imose N."/>
            <person name="Musashino K."/>
            <person name="Yuuki H."/>
            <person name="Oshima A."/>
            <person name="Sasaki N."/>
            <person name="Aotsuka S."/>
            <person name="Yoshikawa Y."/>
            <person name="Matsunawa H."/>
            <person name="Ichihara T."/>
            <person name="Shiohata N."/>
            <person name="Sano S."/>
            <person name="Moriya S."/>
            <person name="Momiyama H."/>
            <person name="Satoh N."/>
            <person name="Takami S."/>
            <person name="Terashima Y."/>
            <person name="Suzuki O."/>
            <person name="Nakagawa S."/>
            <person name="Senoh A."/>
            <person name="Mizoguchi H."/>
            <person name="Goto Y."/>
            <person name="Shimizu F."/>
            <person name="Wakebe H."/>
            <person name="Hishigaki H."/>
            <person name="Watanabe T."/>
            <person name="Sugiyama A."/>
            <person name="Takemoto M."/>
            <person name="Kawakami B."/>
            <person name="Yamazaki M."/>
            <person name="Watanabe K."/>
            <person name="Kumagai A."/>
            <person name="Itakura S."/>
            <person name="Fukuzumi Y."/>
            <person name="Fujimori Y."/>
            <person name="Komiyama M."/>
            <person name="Tashiro H."/>
            <person name="Tanigami A."/>
            <person name="Fujiwara T."/>
            <person name="Ono T."/>
            <person name="Yamada K."/>
            <person name="Fujii Y."/>
            <person name="Ozaki K."/>
            <person name="Hirao M."/>
            <person name="Ohmori Y."/>
            <person name="Kawabata A."/>
            <person name="Hikiji T."/>
            <person name="Kobatake N."/>
            <person name="Inagaki H."/>
            <person name="Ikema Y."/>
            <person name="Okamoto S."/>
            <person name="Okitani R."/>
            <person name="Kawakami T."/>
            <person name="Noguchi S."/>
            <person name="Itoh T."/>
            <person name="Shigeta K."/>
            <person name="Senba T."/>
            <person name="Matsumura K."/>
            <person name="Nakajima Y."/>
            <person name="Mizuno T."/>
            <person name="Morinaga M."/>
            <person name="Sasaki M."/>
            <person name="Togashi T."/>
            <person name="Oyama M."/>
            <person name="Hata H."/>
            <person name="Watanabe M."/>
            <person name="Komatsu T."/>
            <person name="Mizushima-Sugano J."/>
            <person name="Satoh T."/>
            <person name="Shirai Y."/>
            <person name="Takahashi Y."/>
            <person name="Nakagawa K."/>
            <person name="Okumura K."/>
            <person name="Nagase T."/>
            <person name="Nomura N."/>
            <person name="Kikuchi H."/>
            <person name="Masuho Y."/>
            <person name="Yamashita R."/>
            <person name="Nakai K."/>
            <person name="Yada T."/>
            <person name="Nakamura Y."/>
            <person name="Ohara O."/>
            <person name="Isogai T."/>
            <person name="Sugano S."/>
        </authorList>
    </citation>
    <scope>NUCLEOTIDE SEQUENCE [LARGE SCALE MRNA]</scope>
    <source>
        <tissue>Trachea</tissue>
    </source>
</reference>
<reference key="6">
    <citation type="journal article" date="2005" name="Nature">
        <title>Generation and annotation of the DNA sequences of human chromosomes 2 and 4.</title>
        <authorList>
            <person name="Hillier L.W."/>
            <person name="Graves T.A."/>
            <person name="Fulton R.S."/>
            <person name="Fulton L.A."/>
            <person name="Pepin K.H."/>
            <person name="Minx P."/>
            <person name="Wagner-McPherson C."/>
            <person name="Layman D."/>
            <person name="Wylie K."/>
            <person name="Sekhon M."/>
            <person name="Becker M.C."/>
            <person name="Fewell G.A."/>
            <person name="Delehaunty K.D."/>
            <person name="Miner T.L."/>
            <person name="Nash W.E."/>
            <person name="Kremitzki C."/>
            <person name="Oddy L."/>
            <person name="Du H."/>
            <person name="Sun H."/>
            <person name="Bradshaw-Cordum H."/>
            <person name="Ali J."/>
            <person name="Carter J."/>
            <person name="Cordes M."/>
            <person name="Harris A."/>
            <person name="Isak A."/>
            <person name="van Brunt A."/>
            <person name="Nguyen C."/>
            <person name="Du F."/>
            <person name="Courtney L."/>
            <person name="Kalicki J."/>
            <person name="Ozersky P."/>
            <person name="Abbott S."/>
            <person name="Armstrong J."/>
            <person name="Belter E.A."/>
            <person name="Caruso L."/>
            <person name="Cedroni M."/>
            <person name="Cotton M."/>
            <person name="Davidson T."/>
            <person name="Desai A."/>
            <person name="Elliott G."/>
            <person name="Erb T."/>
            <person name="Fronick C."/>
            <person name="Gaige T."/>
            <person name="Haakenson W."/>
            <person name="Haglund K."/>
            <person name="Holmes A."/>
            <person name="Harkins R."/>
            <person name="Kim K."/>
            <person name="Kruchowski S.S."/>
            <person name="Strong C.M."/>
            <person name="Grewal N."/>
            <person name="Goyea E."/>
            <person name="Hou S."/>
            <person name="Levy A."/>
            <person name="Martinka S."/>
            <person name="Mead K."/>
            <person name="McLellan M.D."/>
            <person name="Meyer R."/>
            <person name="Randall-Maher J."/>
            <person name="Tomlinson C."/>
            <person name="Dauphin-Kohlberg S."/>
            <person name="Kozlowicz-Reilly A."/>
            <person name="Shah N."/>
            <person name="Swearengen-Shahid S."/>
            <person name="Snider J."/>
            <person name="Strong J.T."/>
            <person name="Thompson J."/>
            <person name="Yoakum M."/>
            <person name="Leonard S."/>
            <person name="Pearman C."/>
            <person name="Trani L."/>
            <person name="Radionenko M."/>
            <person name="Waligorski J.E."/>
            <person name="Wang C."/>
            <person name="Rock S.M."/>
            <person name="Tin-Wollam A.-M."/>
            <person name="Maupin R."/>
            <person name="Latreille P."/>
            <person name="Wendl M.C."/>
            <person name="Yang S.-P."/>
            <person name="Pohl C."/>
            <person name="Wallis J.W."/>
            <person name="Spieth J."/>
            <person name="Bieri T.A."/>
            <person name="Berkowicz N."/>
            <person name="Nelson J.O."/>
            <person name="Osborne J."/>
            <person name="Ding L."/>
            <person name="Meyer R."/>
            <person name="Sabo A."/>
            <person name="Shotland Y."/>
            <person name="Sinha P."/>
            <person name="Wohldmann P.E."/>
            <person name="Cook L.L."/>
            <person name="Hickenbotham M.T."/>
            <person name="Eldred J."/>
            <person name="Williams D."/>
            <person name="Jones T.A."/>
            <person name="She X."/>
            <person name="Ciccarelli F.D."/>
            <person name="Izaurralde E."/>
            <person name="Taylor J."/>
            <person name="Schmutz J."/>
            <person name="Myers R.M."/>
            <person name="Cox D.R."/>
            <person name="Huang X."/>
            <person name="McPherson J.D."/>
            <person name="Mardis E.R."/>
            <person name="Clifton S.W."/>
            <person name="Warren W.C."/>
            <person name="Chinwalla A.T."/>
            <person name="Eddy S.R."/>
            <person name="Marra M.A."/>
            <person name="Ovcharenko I."/>
            <person name="Furey T.S."/>
            <person name="Miller W."/>
            <person name="Eichler E.E."/>
            <person name="Bork P."/>
            <person name="Suyama M."/>
            <person name="Torrents D."/>
            <person name="Waterston R.H."/>
            <person name="Wilson R.K."/>
        </authorList>
    </citation>
    <scope>NUCLEOTIDE SEQUENCE [LARGE SCALE GENOMIC DNA]</scope>
</reference>
<reference key="7">
    <citation type="submission" date="2005-09" db="EMBL/GenBank/DDBJ databases">
        <authorList>
            <person name="Mural R.J."/>
            <person name="Istrail S."/>
            <person name="Sutton G.G."/>
            <person name="Florea L."/>
            <person name="Halpern A.L."/>
            <person name="Mobarry C.M."/>
            <person name="Lippert R."/>
            <person name="Walenz B."/>
            <person name="Shatkay H."/>
            <person name="Dew I."/>
            <person name="Miller J.R."/>
            <person name="Flanigan M.J."/>
            <person name="Edwards N.J."/>
            <person name="Bolanos R."/>
            <person name="Fasulo D."/>
            <person name="Halldorsson B.V."/>
            <person name="Hannenhalli S."/>
            <person name="Turner R."/>
            <person name="Yooseph S."/>
            <person name="Lu F."/>
            <person name="Nusskern D.R."/>
            <person name="Shue B.C."/>
            <person name="Zheng X.H."/>
            <person name="Zhong F."/>
            <person name="Delcher A.L."/>
            <person name="Huson D.H."/>
            <person name="Kravitz S.A."/>
            <person name="Mouchard L."/>
            <person name="Reinert K."/>
            <person name="Remington K.A."/>
            <person name="Clark A.G."/>
            <person name="Waterman M.S."/>
            <person name="Eichler E.E."/>
            <person name="Adams M.D."/>
            <person name="Hunkapiller M.W."/>
            <person name="Myers E.W."/>
            <person name="Venter J.C."/>
        </authorList>
    </citation>
    <scope>NUCLEOTIDE SEQUENCE [LARGE SCALE GENOMIC DNA]</scope>
</reference>
<reference key="8">
    <citation type="journal article" date="2004" name="Genome Res.">
        <title>The status, quality, and expansion of the NIH full-length cDNA project: the Mammalian Gene Collection (MGC).</title>
        <authorList>
            <consortium name="The MGC Project Team"/>
        </authorList>
    </citation>
    <scope>NUCLEOTIDE SEQUENCE [LARGE SCALE MRNA]</scope>
    <source>
        <tissue>Skin</tissue>
        <tissue>Urinary bladder</tissue>
    </source>
</reference>
<reference key="9">
    <citation type="journal article" date="1997" name="EMBO J.">
        <title>Proteolytic processing regulates receptor specificity and activity of VEGF-C.</title>
        <authorList>
            <person name="Joukov V."/>
            <person name="Sorsa T."/>
            <person name="Kumar V."/>
            <person name="Jeltsch M."/>
            <person name="Claesson-Welsh L."/>
            <person name="Cao Y."/>
            <person name="Saksela O."/>
            <person name="Kalkkinen N."/>
            <person name="Alitalo K."/>
        </authorList>
    </citation>
    <scope>PROTEIN SEQUENCE OF 32-41; 112-121 AND 228-233</scope>
    <scope>SUBCELLULAR LOCATION</scope>
    <scope>MUTAGENESIS OF ARG-227</scope>
</reference>
<reference key="10">
    <citation type="journal article" date="2004" name="Protein Sci.">
        <title>Signal peptide prediction based on analysis of experimentally verified cleavage sites.</title>
        <authorList>
            <person name="Zhang Z."/>
            <person name="Henzel W.J."/>
        </authorList>
    </citation>
    <scope>PROTEIN SEQUENCE OF 32-46</scope>
</reference>
<reference key="11">
    <citation type="journal article" date="2013" name="Circ. Res.">
        <title>Mutation in vascular endothelial growth factor-C, a ligand for vascular endothelial growth factor receptor-3, is associated with autosomal dominant milroy-like primary lymphedema.</title>
        <authorList>
            <person name="Gordon K."/>
            <person name="Schulte D."/>
            <person name="Brice G."/>
            <person name="Simpson M.A."/>
            <person name="Roukens M.G."/>
            <person name="van Impel A."/>
            <person name="Connell F."/>
            <person name="Kalidas K."/>
            <person name="Jeffery S."/>
            <person name="Mortimer P.S."/>
            <person name="Mansour S."/>
            <person name="Schulte-Merker S."/>
            <person name="Ostergaard P."/>
        </authorList>
    </citation>
    <scope>INVOLVEMENT IN LMPHM4</scope>
</reference>
<reference key="12">
    <citation type="journal article" date="2014" name="J. Med. Genet.">
        <title>A novel stop mutation in the vascular endothelial growth factor-C gene (VEGFC) results in Milroy-like disease.</title>
        <authorList>
            <person name="Balboa-Beltran E."/>
            <person name="Fernandez-Seara M.J."/>
            <person name="Perez-Munuzuri A."/>
            <person name="Lago R."/>
            <person name="Garcia-Magan C."/>
            <person name="Couce M.L."/>
            <person name="Sobrino B."/>
            <person name="Amigo J."/>
            <person name="Carracedo A."/>
            <person name="Barros F."/>
        </authorList>
    </citation>
    <scope>INVOLVEMENT IN LMPHM4</scope>
</reference>
<reference key="13">
    <citation type="journal article" date="2017" name="Circ. Res.">
        <title>Polydom Is an Extracellular Matrix Protein Involved in Lymphatic Vessel Remodeling.</title>
        <authorList>
            <person name="Morooka N."/>
            <person name="Futaki S."/>
            <person name="Sato-Nishiuchi R."/>
            <person name="Nishino M."/>
            <person name="Totani Y."/>
            <person name="Shimono C."/>
            <person name="Nakano I."/>
            <person name="Nakajima H."/>
            <person name="Mochizuki N."/>
            <person name="Sekiguchi K."/>
        </authorList>
    </citation>
    <scope>DEVELOPMENTAL STAGE</scope>
</reference>
<reference key="14">
    <citation type="journal article" date="2010" name="Proc. Natl. Acad. Sci. U.S.A.">
        <title>Structural determinants of growth factor binding and specificity by VEGF receptor 2.</title>
        <authorList>
            <person name="Leppanen V.M."/>
            <person name="Prota A.E."/>
            <person name="Jeltsch M."/>
            <person name="Anisimov A."/>
            <person name="Kalkkinen N."/>
            <person name="Strandin T."/>
            <person name="Lankinen H."/>
            <person name="Goldman A."/>
            <person name="Ballmer-Hofer K."/>
            <person name="Alitalo K."/>
        </authorList>
    </citation>
    <scope>X-RAY CRYSTALLOGRAPHY (2.7 ANGSTROMS) OF 112-215 IN COMPLEX WITH KDR</scope>
    <scope>FUNCTION</scope>
    <scope>DISULFIDE BONDS</scope>
    <scope>GLYCOSYLATION AT ASN-175 AND ASN-205</scope>
    <scope>SUBUNIT</scope>
</reference>
<reference key="15">
    <citation type="journal article" date="2013" name="Proc. Natl. Acad. Sci. U.S.A.">
        <title>Structural and mechanistic insights into VEGF receptor 3 ligand binding and activation.</title>
        <authorList>
            <person name="Leppanen V.M."/>
            <person name="Tvorogov D."/>
            <person name="Kisko K."/>
            <person name="Prota A.E."/>
            <person name="Jeltsch M."/>
            <person name="Anisimov A."/>
            <person name="Markovic-Mueller S."/>
            <person name="Stuttfeld E."/>
            <person name="Goldie K.N."/>
            <person name="Ballmer-Hofer K."/>
            <person name="Alitalo K."/>
        </authorList>
    </citation>
    <scope>X-RAY CRYSTALLOGRAPHY (4.20 ANGSTROMS) OF 103-215 IN COMPLEX WITH FLT4</scope>
    <scope>GLYCOSYLATION AT ASN-175 AND ASN-205</scope>
    <scope>DISULFIDE BOND</scope>
</reference>
<comment type="function">
    <text evidence="3">Growth factor active in angiogenesis, and endothelial cell growth, stimulating their proliferation and migration and also has effects on the permeability of blood vessels. May function in angiogenesis of the venous and lymphatic vascular systems during embryogenesis, and also in the maintenance of differentiated lymphatic endothelium in adults. Binds and activates KDR/VEGFR2 and FLT4/VEGFR3 receptors.</text>
</comment>
<comment type="subunit">
    <text evidence="3 5">Homodimer; non-covalent and antiparallel (PubMed:20145116). Interacts with FLT4/VEGFR3; the interaction is required for FLT4/VEGFR3 homodimarization and activation (PubMed:23878260).</text>
</comment>
<comment type="interaction">
    <interactant intactId="EBI-3405539">
        <id>P49767</id>
    </interactant>
    <interactant intactId="EBI-1005467">
        <id>P35916</id>
        <label>FLT4</label>
    </interactant>
    <organismsDiffer>false</organismsDiffer>
    <experiments>2</experiments>
</comment>
<comment type="interaction">
    <interactant intactId="EBI-3405539">
        <id>P49767</id>
    </interactant>
    <interactant intactId="EBI-1005487">
        <id>P35968</id>
        <label>KDR</label>
    </interactant>
    <organismsDiffer>false</organismsDiffer>
    <experiments>6</experiments>
</comment>
<comment type="interaction">
    <interactant intactId="EBI-3405539">
        <id>P49767</id>
    </interactant>
    <interactant intactId="EBI-744081">
        <id>Q96EQ0</id>
        <label>SGTB</label>
    </interactant>
    <organismsDiffer>false</organismsDiffer>
    <experiments>3</experiments>
</comment>
<comment type="subcellular location">
    <subcellularLocation>
        <location evidence="10">Secreted</location>
    </subcellularLocation>
</comment>
<comment type="tissue specificity">
    <text evidence="8 9 11">Expressed in the spleen (PubMed:8700872, PubMed:9247316). Expressed in the lymph node, thymus, appendix and bone marrow (PubMed:9247316). Expressed in the heart, placenta, skeletal muscle, ovary and small intestine (PubMed:8617204, PubMed:8700872). Expressed in the prostate, testis and colon (PubMed:8700872).</text>
</comment>
<comment type="developmental stage">
    <text evidence="7 9 11">Expressed in fetal lung and kidney (PubMed:8700872). Expressed in fetal liver (PubMed:28179430, PubMed:9247316).</text>
</comment>
<comment type="PTM">
    <text>Undergoes a complex proteolytic maturation which generates a variety of processed secreted forms with increased activity toward VEGFR-3, but only the fully processed form could activate VEGFR-2. VEGF-C first form an antiparallel homodimer linked by disulfide bonds. Before secretion, a cleavage occurs between Arg-227 and Ser-228 producing a heterotetramer. The next extracellular step of the processing removes the N-terminal propeptide. Finally the mature VEGF-C is composed mostly of two VEGF homology domains (VHDs) bound by non-covalent interactions.</text>
</comment>
<comment type="disease" evidence="4 6">
    <disease id="DI-04160">
        <name>Lymphatic malformation 4</name>
        <acronym>LMPHM4</acronym>
        <description>A form of primary lymphedema, a disease characterized by swelling of body parts due to developmental anomalies and functional defects of the lymphatic system. Patients with lymphedema may suffer from recurrent local infections. LMPHM4 is an autosomal dominant form with onset at birth or in early childhood. Affected individuals manifest lymphedema of lower limbs with prominent veins, and impaired lymphatic uptake and drainage. Additional features are nail dysplasia, skin hyperkeratosis and papillomatosis.</description>
        <dbReference type="MIM" id="615907"/>
    </disease>
    <text>The disease is caused by variants affecting the gene represented in this entry.</text>
</comment>
<comment type="similarity">
    <text evidence="12">Belongs to the PDGF/VEGF growth factor family.</text>
</comment>
<organism>
    <name type="scientific">Homo sapiens</name>
    <name type="common">Human</name>
    <dbReference type="NCBI Taxonomy" id="9606"/>
    <lineage>
        <taxon>Eukaryota</taxon>
        <taxon>Metazoa</taxon>
        <taxon>Chordata</taxon>
        <taxon>Craniata</taxon>
        <taxon>Vertebrata</taxon>
        <taxon>Euteleostomi</taxon>
        <taxon>Mammalia</taxon>
        <taxon>Eutheria</taxon>
        <taxon>Euarchontoglires</taxon>
        <taxon>Primates</taxon>
        <taxon>Haplorrhini</taxon>
        <taxon>Catarrhini</taxon>
        <taxon>Hominidae</taxon>
        <taxon>Homo</taxon>
    </lineage>
</organism>
<keyword id="KW-0002">3D-structure</keyword>
<keyword id="KW-0037">Angiogenesis</keyword>
<keyword id="KW-0165">Cleavage on pair of basic residues</keyword>
<keyword id="KW-0217">Developmental protein</keyword>
<keyword id="KW-0221">Differentiation</keyword>
<keyword id="KW-0903">Direct protein sequencing</keyword>
<keyword id="KW-1015">Disulfide bond</keyword>
<keyword id="KW-0325">Glycoprotein</keyword>
<keyword id="KW-0339">Growth factor</keyword>
<keyword id="KW-0497">Mitogen</keyword>
<keyword id="KW-1267">Proteomics identification</keyword>
<keyword id="KW-1185">Reference proteome</keyword>
<keyword id="KW-0677">Repeat</keyword>
<keyword id="KW-0964">Secreted</keyword>
<keyword id="KW-0732">Signal</keyword>
<accession>P49767</accession>
<accession>B2R9Q8</accession>